<sequence>MKPSLFKSLYFQVLAAIAIGVLLGHFNPELGAQMKPLGDGFVKLIKMIIAPVIFCTVVSGIAGMESMKAVGRTGAVALIYFEVVSTIALIIGLVVVNVLQPGAGMNVDPATLDAKAVAMYAQQAEQQGVVAFLLDVIPGSVIGAFASGNILQVLLFAILFGFALHRMGDKGTLVFNFIDSFSHVFFGIINMIMRLAPVGAFGAMAFTIGKYGVGSLVQLGQLIVCFYITCLLFVVVVLGLIARVVGFNIFKFIAYIKEELLIVLGTSSSESALPRMLAKMENLGCKKSVVGLVIPTGYSFNLDGTSIYLTMAAVFIAQATNSHMDIWHQITLLVVLLLSSKGAAGVTGSGFIVLAATLSAVGHLPVAGLALILGIDRFMSEARALTNLVGNGVATLVVAKWVGQLDEKKLKEQLVHRKNEVKSV</sequence>
<keyword id="KW-0997">Cell inner membrane</keyword>
<keyword id="KW-1003">Cell membrane</keyword>
<keyword id="KW-0472">Membrane</keyword>
<keyword id="KW-1185">Reference proteome</keyword>
<keyword id="KW-0769">Symport</keyword>
<keyword id="KW-0812">Transmembrane</keyword>
<keyword id="KW-1133">Transmembrane helix</keyword>
<keyword id="KW-0813">Transport</keyword>
<organism>
    <name type="scientific">Erwinia tasmaniensis (strain DSM 17950 / CFBP 7177 / CIP 109463 / NCPPB 4357 / Et1/99)</name>
    <dbReference type="NCBI Taxonomy" id="465817"/>
    <lineage>
        <taxon>Bacteria</taxon>
        <taxon>Pseudomonadati</taxon>
        <taxon>Pseudomonadota</taxon>
        <taxon>Gammaproteobacteria</taxon>
        <taxon>Enterobacterales</taxon>
        <taxon>Erwiniaceae</taxon>
        <taxon>Erwinia</taxon>
    </lineage>
</organism>
<dbReference type="EMBL" id="CU468135">
    <property type="protein sequence ID" value="CAO98432.1"/>
    <property type="molecule type" value="Genomic_DNA"/>
</dbReference>
<dbReference type="RefSeq" id="WP_012443055.1">
    <property type="nucleotide sequence ID" value="NC_010694.1"/>
</dbReference>
<dbReference type="SMR" id="B2VCL2"/>
<dbReference type="STRING" id="465817.ETA_33860"/>
<dbReference type="KEGG" id="eta:ETA_33860"/>
<dbReference type="eggNOG" id="COG1301">
    <property type="taxonomic scope" value="Bacteria"/>
</dbReference>
<dbReference type="HOGENOM" id="CLU_019375_7_0_6"/>
<dbReference type="OrthoDB" id="9766690at2"/>
<dbReference type="Proteomes" id="UP000001726">
    <property type="component" value="Chromosome"/>
</dbReference>
<dbReference type="GO" id="GO:0005886">
    <property type="term" value="C:plasma membrane"/>
    <property type="evidence" value="ECO:0007669"/>
    <property type="project" value="UniProtKB-SubCell"/>
</dbReference>
<dbReference type="GO" id="GO:0015138">
    <property type="term" value="F:fumarate transmembrane transporter activity"/>
    <property type="evidence" value="ECO:0007669"/>
    <property type="project" value="TreeGrafter"/>
</dbReference>
<dbReference type="GO" id="GO:0015366">
    <property type="term" value="F:malate:proton symporter activity"/>
    <property type="evidence" value="ECO:0007669"/>
    <property type="project" value="TreeGrafter"/>
</dbReference>
<dbReference type="GO" id="GO:0015141">
    <property type="term" value="F:succinate transmembrane transporter activity"/>
    <property type="evidence" value="ECO:0007669"/>
    <property type="project" value="TreeGrafter"/>
</dbReference>
<dbReference type="GO" id="GO:0070778">
    <property type="term" value="P:L-aspartate transmembrane transport"/>
    <property type="evidence" value="ECO:0007669"/>
    <property type="project" value="TreeGrafter"/>
</dbReference>
<dbReference type="FunFam" id="1.10.3860.10:FF:000001">
    <property type="entry name" value="C4-dicarboxylate transport protein"/>
    <property type="match status" value="1"/>
</dbReference>
<dbReference type="Gene3D" id="1.10.3860.10">
    <property type="entry name" value="Sodium:dicarboxylate symporter"/>
    <property type="match status" value="1"/>
</dbReference>
<dbReference type="HAMAP" id="MF_01300">
    <property type="entry name" value="C4_dicarb_transport"/>
    <property type="match status" value="1"/>
</dbReference>
<dbReference type="InterPro" id="IPR023954">
    <property type="entry name" value="C4_dicarb_transport"/>
</dbReference>
<dbReference type="InterPro" id="IPR001991">
    <property type="entry name" value="Na-dicarboxylate_symporter"/>
</dbReference>
<dbReference type="InterPro" id="IPR018107">
    <property type="entry name" value="Na-dicarboxylate_symporter_CS"/>
</dbReference>
<dbReference type="InterPro" id="IPR036458">
    <property type="entry name" value="Na:dicarbo_symporter_sf"/>
</dbReference>
<dbReference type="NCBIfam" id="NF002461">
    <property type="entry name" value="PRK01663.1"/>
    <property type="match status" value="1"/>
</dbReference>
<dbReference type="NCBIfam" id="NF009587">
    <property type="entry name" value="PRK13027.1"/>
    <property type="match status" value="1"/>
</dbReference>
<dbReference type="PANTHER" id="PTHR42865:SF1">
    <property type="entry name" value="AEROBIC C4-DICARBOXYLATE TRANSPORT PROTEIN"/>
    <property type="match status" value="1"/>
</dbReference>
<dbReference type="PANTHER" id="PTHR42865">
    <property type="entry name" value="PROTON/GLUTAMATE-ASPARTATE SYMPORTER"/>
    <property type="match status" value="1"/>
</dbReference>
<dbReference type="Pfam" id="PF00375">
    <property type="entry name" value="SDF"/>
    <property type="match status" value="1"/>
</dbReference>
<dbReference type="PRINTS" id="PR00173">
    <property type="entry name" value="EDTRNSPORT"/>
</dbReference>
<dbReference type="SUPFAM" id="SSF118215">
    <property type="entry name" value="Proton glutamate symport protein"/>
    <property type="match status" value="1"/>
</dbReference>
<dbReference type="PROSITE" id="PS00713">
    <property type="entry name" value="NA_DICARBOXYL_SYMP_1"/>
    <property type="match status" value="1"/>
</dbReference>
<dbReference type="PROSITE" id="PS00714">
    <property type="entry name" value="NA_DICARBOXYL_SYMP_2"/>
    <property type="match status" value="1"/>
</dbReference>
<feature type="chain" id="PRO_1000140457" description="C4-dicarboxylate transport protein">
    <location>
        <begin position="1"/>
        <end position="424"/>
    </location>
</feature>
<feature type="transmembrane region" description="Helical" evidence="1">
    <location>
        <begin position="4"/>
        <end position="24"/>
    </location>
</feature>
<feature type="transmembrane region" description="Helical" evidence="1">
    <location>
        <begin position="44"/>
        <end position="64"/>
    </location>
</feature>
<feature type="transmembrane region" description="Helical" evidence="1">
    <location>
        <begin position="76"/>
        <end position="96"/>
    </location>
</feature>
<feature type="transmembrane region" description="Helical" evidence="1">
    <location>
        <begin position="142"/>
        <end position="162"/>
    </location>
</feature>
<feature type="transmembrane region" description="Helical" evidence="1">
    <location>
        <begin position="184"/>
        <end position="206"/>
    </location>
</feature>
<feature type="transmembrane region" description="Helical" evidence="1">
    <location>
        <begin position="222"/>
        <end position="242"/>
    </location>
</feature>
<feature type="transmembrane region" description="Helical" evidence="1">
    <location>
        <begin position="326"/>
        <end position="346"/>
    </location>
</feature>
<feature type="transmembrane region" description="Helical" evidence="1">
    <location>
        <begin position="352"/>
        <end position="372"/>
    </location>
</feature>
<proteinExistence type="inferred from homology"/>
<accession>B2VCL2</accession>
<comment type="function">
    <text evidence="1">Responsible for the transport of dicarboxylates such as succinate, fumarate, and malate from the periplasm across the membrane.</text>
</comment>
<comment type="subcellular location">
    <subcellularLocation>
        <location evidence="1">Cell inner membrane</location>
        <topology evidence="1">Multi-pass membrane protein</topology>
    </subcellularLocation>
</comment>
<comment type="similarity">
    <text evidence="1">Belongs to the dicarboxylate/amino acid:cation symporter (DAACS) (TC 2.A.23) family.</text>
</comment>
<name>DCTA_ERWT9</name>
<evidence type="ECO:0000255" key="1">
    <source>
        <dbReference type="HAMAP-Rule" id="MF_01300"/>
    </source>
</evidence>
<protein>
    <recommendedName>
        <fullName evidence="1">C4-dicarboxylate transport protein</fullName>
    </recommendedName>
</protein>
<gene>
    <name evidence="1" type="primary">dctA</name>
    <name type="ordered locus">ETA_33860</name>
</gene>
<reference key="1">
    <citation type="journal article" date="2008" name="Environ. Microbiol.">
        <title>The genome of Erwinia tasmaniensis strain Et1/99, a non-pathogenic bacterium in the genus Erwinia.</title>
        <authorList>
            <person name="Kube M."/>
            <person name="Migdoll A.M."/>
            <person name="Mueller I."/>
            <person name="Kuhl H."/>
            <person name="Beck A."/>
            <person name="Reinhardt R."/>
            <person name="Geider K."/>
        </authorList>
    </citation>
    <scope>NUCLEOTIDE SEQUENCE [LARGE SCALE GENOMIC DNA]</scope>
    <source>
        <strain>DSM 17950 / CFBP 7177 / CIP 109463 / NCPPB 4357 / Et1/99</strain>
    </source>
</reference>